<accession>P64064</accession>
<accession>Q490R2</accession>
<accession>Q9A1D0</accession>
<keyword id="KW-0342">GTP-binding</keyword>
<keyword id="KW-0547">Nucleotide-binding</keyword>
<keyword id="KW-1185">Reference proteome</keyword>
<keyword id="KW-0677">Repeat</keyword>
<keyword id="KW-0690">Ribosome biogenesis</keyword>
<reference key="1">
    <citation type="journal article" date="2001" name="Proc. Natl. Acad. Sci. U.S.A.">
        <title>Complete genome sequence of an M1 strain of Streptococcus pyogenes.</title>
        <authorList>
            <person name="Ferretti J.J."/>
            <person name="McShan W.M."/>
            <person name="Ajdic D.J."/>
            <person name="Savic D.J."/>
            <person name="Savic G."/>
            <person name="Lyon K."/>
            <person name="Primeaux C."/>
            <person name="Sezate S."/>
            <person name="Suvorov A.N."/>
            <person name="Kenton S."/>
            <person name="Lai H.S."/>
            <person name="Lin S.P."/>
            <person name="Qian Y."/>
            <person name="Jia H.G."/>
            <person name="Najar F.Z."/>
            <person name="Ren Q."/>
            <person name="Zhu H."/>
            <person name="Song L."/>
            <person name="White J."/>
            <person name="Yuan X."/>
            <person name="Clifton S.W."/>
            <person name="Roe B.A."/>
            <person name="McLaughlin R.E."/>
        </authorList>
    </citation>
    <scope>NUCLEOTIDE SEQUENCE [LARGE SCALE GENOMIC DNA]</scope>
    <source>
        <strain>ATCC 700294 / SF370 / Serotype M1</strain>
    </source>
</reference>
<reference key="2">
    <citation type="journal article" date="2005" name="J. Infect. Dis.">
        <title>Evolutionary origin and emergence of a highly successful clone of serotype M1 group A Streptococcus involved multiple horizontal gene transfer events.</title>
        <authorList>
            <person name="Sumby P."/>
            <person name="Porcella S.F."/>
            <person name="Madrigal A.G."/>
            <person name="Barbian K.D."/>
            <person name="Virtaneva K."/>
            <person name="Ricklefs S.M."/>
            <person name="Sturdevant D.E."/>
            <person name="Graham M.R."/>
            <person name="Vuopio-Varkila J."/>
            <person name="Hoe N.P."/>
            <person name="Musser J.M."/>
        </authorList>
    </citation>
    <scope>NUCLEOTIDE SEQUENCE [LARGE SCALE GENOMIC DNA]</scope>
    <source>
        <strain>ATCC BAA-947 / MGAS5005 / Serotype M1</strain>
    </source>
</reference>
<evidence type="ECO:0000255" key="1">
    <source>
        <dbReference type="HAMAP-Rule" id="MF_00195"/>
    </source>
</evidence>
<proteinExistence type="inferred from homology"/>
<dbReference type="EMBL" id="AE004092">
    <property type="protein sequence ID" value="AAK33393.1"/>
    <property type="molecule type" value="Genomic_DNA"/>
</dbReference>
<dbReference type="EMBL" id="CP000017">
    <property type="protein sequence ID" value="AAZ50906.1"/>
    <property type="molecule type" value="Genomic_DNA"/>
</dbReference>
<dbReference type="RefSeq" id="NP_268672.1">
    <property type="nucleotide sequence ID" value="NC_002737.2"/>
</dbReference>
<dbReference type="SMR" id="P64064"/>
<dbReference type="PaxDb" id="1314-HKU360_00326"/>
<dbReference type="KEGG" id="spy:SPy_0341"/>
<dbReference type="KEGG" id="spz:M5005_Spy0287"/>
<dbReference type="PATRIC" id="fig|160490.10.peg.294"/>
<dbReference type="HOGENOM" id="CLU_016077_6_2_9"/>
<dbReference type="OMA" id="CNLPQYV"/>
<dbReference type="Proteomes" id="UP000000750">
    <property type="component" value="Chromosome"/>
</dbReference>
<dbReference type="GO" id="GO:0005525">
    <property type="term" value="F:GTP binding"/>
    <property type="evidence" value="ECO:0007669"/>
    <property type="project" value="UniProtKB-UniRule"/>
</dbReference>
<dbReference type="GO" id="GO:0043022">
    <property type="term" value="F:ribosome binding"/>
    <property type="evidence" value="ECO:0007669"/>
    <property type="project" value="TreeGrafter"/>
</dbReference>
<dbReference type="GO" id="GO:0042254">
    <property type="term" value="P:ribosome biogenesis"/>
    <property type="evidence" value="ECO:0007669"/>
    <property type="project" value="UniProtKB-KW"/>
</dbReference>
<dbReference type="CDD" id="cd01894">
    <property type="entry name" value="EngA1"/>
    <property type="match status" value="1"/>
</dbReference>
<dbReference type="CDD" id="cd01895">
    <property type="entry name" value="EngA2"/>
    <property type="match status" value="1"/>
</dbReference>
<dbReference type="FunFam" id="3.30.300.20:FF:000004">
    <property type="entry name" value="GTPase Der"/>
    <property type="match status" value="1"/>
</dbReference>
<dbReference type="FunFam" id="3.40.50.300:FF:000040">
    <property type="entry name" value="GTPase Der"/>
    <property type="match status" value="1"/>
</dbReference>
<dbReference type="FunFam" id="3.40.50.300:FF:000057">
    <property type="entry name" value="GTPase Der"/>
    <property type="match status" value="1"/>
</dbReference>
<dbReference type="Gene3D" id="3.30.300.20">
    <property type="match status" value="1"/>
</dbReference>
<dbReference type="Gene3D" id="3.40.50.300">
    <property type="entry name" value="P-loop containing nucleotide triphosphate hydrolases"/>
    <property type="match status" value="2"/>
</dbReference>
<dbReference type="HAMAP" id="MF_00195">
    <property type="entry name" value="GTPase_Der"/>
    <property type="match status" value="1"/>
</dbReference>
<dbReference type="InterPro" id="IPR031166">
    <property type="entry name" value="G_ENGA"/>
</dbReference>
<dbReference type="InterPro" id="IPR006073">
    <property type="entry name" value="GTP-bd"/>
</dbReference>
<dbReference type="InterPro" id="IPR016484">
    <property type="entry name" value="GTPase_Der"/>
</dbReference>
<dbReference type="InterPro" id="IPR032859">
    <property type="entry name" value="KH_dom-like"/>
</dbReference>
<dbReference type="InterPro" id="IPR015946">
    <property type="entry name" value="KH_dom-like_a/b"/>
</dbReference>
<dbReference type="InterPro" id="IPR027417">
    <property type="entry name" value="P-loop_NTPase"/>
</dbReference>
<dbReference type="InterPro" id="IPR005225">
    <property type="entry name" value="Small_GTP-bd"/>
</dbReference>
<dbReference type="NCBIfam" id="TIGR03594">
    <property type="entry name" value="GTPase_EngA"/>
    <property type="match status" value="1"/>
</dbReference>
<dbReference type="NCBIfam" id="TIGR00231">
    <property type="entry name" value="small_GTP"/>
    <property type="match status" value="2"/>
</dbReference>
<dbReference type="PANTHER" id="PTHR43834">
    <property type="entry name" value="GTPASE DER"/>
    <property type="match status" value="1"/>
</dbReference>
<dbReference type="PANTHER" id="PTHR43834:SF6">
    <property type="entry name" value="GTPASE DER"/>
    <property type="match status" value="1"/>
</dbReference>
<dbReference type="Pfam" id="PF14714">
    <property type="entry name" value="KH_dom-like"/>
    <property type="match status" value="1"/>
</dbReference>
<dbReference type="Pfam" id="PF01926">
    <property type="entry name" value="MMR_HSR1"/>
    <property type="match status" value="2"/>
</dbReference>
<dbReference type="PIRSF" id="PIRSF006485">
    <property type="entry name" value="GTP-binding_EngA"/>
    <property type="match status" value="1"/>
</dbReference>
<dbReference type="PRINTS" id="PR00326">
    <property type="entry name" value="GTP1OBG"/>
</dbReference>
<dbReference type="SUPFAM" id="SSF52540">
    <property type="entry name" value="P-loop containing nucleoside triphosphate hydrolases"/>
    <property type="match status" value="2"/>
</dbReference>
<dbReference type="PROSITE" id="PS51712">
    <property type="entry name" value="G_ENGA"/>
    <property type="match status" value="2"/>
</dbReference>
<name>DER_STRP1</name>
<protein>
    <recommendedName>
        <fullName evidence="1">GTPase Der</fullName>
    </recommendedName>
    <alternativeName>
        <fullName evidence="1">GTP-binding protein EngA</fullName>
    </alternativeName>
</protein>
<gene>
    <name evidence="1" type="primary">der</name>
    <name type="synonym">engA</name>
    <name type="synonym">pgdA</name>
    <name type="ordered locus">SPy_0341</name>
    <name type="ordered locus">M5005_Spy0287</name>
</gene>
<organism>
    <name type="scientific">Streptococcus pyogenes serotype M1</name>
    <dbReference type="NCBI Taxonomy" id="301447"/>
    <lineage>
        <taxon>Bacteria</taxon>
        <taxon>Bacillati</taxon>
        <taxon>Bacillota</taxon>
        <taxon>Bacilli</taxon>
        <taxon>Lactobacillales</taxon>
        <taxon>Streptococcaceae</taxon>
        <taxon>Streptococcus</taxon>
    </lineage>
</organism>
<comment type="function">
    <text evidence="1">GTPase that plays an essential role in the late steps of ribosome biogenesis.</text>
</comment>
<comment type="subunit">
    <text evidence="1">Associates with the 50S ribosomal subunit.</text>
</comment>
<comment type="similarity">
    <text evidence="1">Belongs to the TRAFAC class TrmE-Era-EngA-EngB-Septin-like GTPase superfamily. EngA (Der) GTPase family.</text>
</comment>
<feature type="chain" id="PRO_0000179057" description="GTPase Der">
    <location>
        <begin position="1"/>
        <end position="436"/>
    </location>
</feature>
<feature type="domain" description="EngA-type G 1">
    <location>
        <begin position="4"/>
        <end position="167"/>
    </location>
</feature>
<feature type="domain" description="EngA-type G 2">
    <location>
        <begin position="175"/>
        <end position="351"/>
    </location>
</feature>
<feature type="domain" description="KH-like" evidence="1">
    <location>
        <begin position="352"/>
        <end position="436"/>
    </location>
</feature>
<feature type="binding site" evidence="1">
    <location>
        <begin position="10"/>
        <end position="17"/>
    </location>
    <ligand>
        <name>GTP</name>
        <dbReference type="ChEBI" id="CHEBI:37565"/>
        <label>1</label>
    </ligand>
</feature>
<feature type="binding site" evidence="1">
    <location>
        <begin position="57"/>
        <end position="61"/>
    </location>
    <ligand>
        <name>GTP</name>
        <dbReference type="ChEBI" id="CHEBI:37565"/>
        <label>1</label>
    </ligand>
</feature>
<feature type="binding site" evidence="1">
    <location>
        <begin position="119"/>
        <end position="122"/>
    </location>
    <ligand>
        <name>GTP</name>
        <dbReference type="ChEBI" id="CHEBI:37565"/>
        <label>1</label>
    </ligand>
</feature>
<feature type="binding site" evidence="1">
    <location>
        <begin position="181"/>
        <end position="188"/>
    </location>
    <ligand>
        <name>GTP</name>
        <dbReference type="ChEBI" id="CHEBI:37565"/>
        <label>2</label>
    </ligand>
</feature>
<feature type="binding site" evidence="1">
    <location>
        <begin position="229"/>
        <end position="233"/>
    </location>
    <ligand>
        <name>GTP</name>
        <dbReference type="ChEBI" id="CHEBI:37565"/>
        <label>2</label>
    </ligand>
</feature>
<feature type="binding site" evidence="1">
    <location>
        <begin position="294"/>
        <end position="297"/>
    </location>
    <ligand>
        <name>GTP</name>
        <dbReference type="ChEBI" id="CHEBI:37565"/>
        <label>2</label>
    </ligand>
</feature>
<sequence length="436" mass="48802">MVLPTVAIVGRPNVGKSTLFNRIAGERISIVEDVEGVTRDRIYATGEWLNRQFSLIDTGGIDDVDAPFMEQIKHQAQIAMEEADVIVFVVSGKEGVTDADEYVSKILYRTNTPVILAVNKVDNPEMRNDIYDFYSLGLGDPYPVSSVHGIGTGDVLDAIVENLPVEEAEENDDIIRFSLIGRPNVGKSSLINAILGEDRVIASPVAGTTRDAIDTHFTDADGQEFTMIDTAGMRKSGKIYENTEKYSVMRAMRAIDRSDVVLMVINAEEGIREYDKRIAGFAHEAGKGMIIVVNKWDTIDKDNHTVAKWEADIRDQFQFLTYAPIIFVSALTKQRLNKLPDLIKRISESQNKRIPSAVLNDVIMDAIAINPTPTDKGKRLKIFYATQVSVKPPTFVVFVNEEELMHFSYLRFLENQIRAAFTFEGTPIHLIARKRK</sequence>